<comment type="function">
    <text evidence="1">The phosphoenolpyruvate-dependent sugar phosphotransferase system (sugar PTS), a major carbohydrate active -transport system, catalyzes the phosphorylation of incoming sugar substrates concomitantly with their translocation across the cell membrane. This system is involved in alpha- and beta-glucoside transport (By similarity).</text>
</comment>
<comment type="subcellular location">
    <subcellularLocation>
        <location evidence="4">Cell membrane</location>
        <topology evidence="4">Multi-pass membrane protein</topology>
    </subcellularLocation>
</comment>
<comment type="domain">
    <text>The EIIC domain forms the PTS system translocation channel and contains the specific substrate-binding site.</text>
</comment>
<comment type="domain">
    <text>The EIIB domain is phosphorylated by phospho-EIIA on a cysteinyl or histidyl residue, depending on the transported sugar. Then, it transfers the phosphoryl group to the sugar substrate concomitantly with the sugar uptake processed by the EIIC domain.</text>
</comment>
<comment type="domain">
    <text>The EIIA domain is phosphorylated by phospho-HPr on a histidyl residue. Then, it transfers the phosphoryl group to the EIIB domain.</text>
</comment>
<keyword id="KW-1003">Cell membrane</keyword>
<keyword id="KW-0418">Kinase</keyword>
<keyword id="KW-0472">Membrane</keyword>
<keyword id="KW-0598">Phosphotransferase system</keyword>
<keyword id="KW-0762">Sugar transport</keyword>
<keyword id="KW-0808">Transferase</keyword>
<keyword id="KW-0812">Transmembrane</keyword>
<keyword id="KW-1133">Transmembrane helix</keyword>
<keyword id="KW-0813">Transport</keyword>
<proteinExistence type="inferred from homology"/>
<gene>
    <name type="primary">glcB</name>
    <name type="ordered locus">SAS2424</name>
</gene>
<organism>
    <name type="scientific">Staphylococcus aureus (strain MSSA476)</name>
    <dbReference type="NCBI Taxonomy" id="282459"/>
    <lineage>
        <taxon>Bacteria</taxon>
        <taxon>Bacillati</taxon>
        <taxon>Bacillota</taxon>
        <taxon>Bacilli</taxon>
        <taxon>Bacillales</taxon>
        <taxon>Staphylococcaceae</taxon>
        <taxon>Staphylococcus</taxon>
    </lineage>
</organism>
<protein>
    <recommendedName>
        <fullName>PTS system glucoside-specific EIICBA component</fullName>
    </recommendedName>
    <domain>
        <recommendedName>
            <fullName>Glucoside permease IIC component</fullName>
        </recommendedName>
        <alternativeName>
            <fullName>PTS system glucoside-specific EIIC component</fullName>
        </alternativeName>
    </domain>
    <domain>
        <recommendedName>
            <fullName>Glucoside-specific phosphotransferase enzyme IIB component</fullName>
            <ecNumber>2.7.1.-</ecNumber>
        </recommendedName>
        <alternativeName>
            <fullName>PTS system glucoside-specific EIIB component</fullName>
        </alternativeName>
    </domain>
    <domain>
        <recommendedName>
            <fullName>Glucoside-specific phosphotransferase enzyme IIA component</fullName>
        </recommendedName>
        <alternativeName>
            <fullName>PTS system glucoside-specific EIIA component</fullName>
        </alternativeName>
    </domain>
</protein>
<name>PTU3C_STAAS</name>
<feature type="chain" id="PRO_0000351416" description="PTS system glucoside-specific EIICBA component">
    <location>
        <begin position="1"/>
        <end position="688"/>
    </location>
</feature>
<feature type="transmembrane region" description="Helical" evidence="4">
    <location>
        <begin position="12"/>
        <end position="32"/>
    </location>
</feature>
<feature type="transmembrane region" description="Helical" evidence="4">
    <location>
        <begin position="81"/>
        <end position="101"/>
    </location>
</feature>
<feature type="transmembrane region" description="Helical" evidence="4">
    <location>
        <begin position="137"/>
        <end position="157"/>
    </location>
</feature>
<feature type="transmembrane region" description="Helical" evidence="4">
    <location>
        <begin position="182"/>
        <end position="202"/>
    </location>
</feature>
<feature type="transmembrane region" description="Helical" evidence="4">
    <location>
        <begin position="223"/>
        <end position="243"/>
    </location>
</feature>
<feature type="transmembrane region" description="Helical" evidence="4">
    <location>
        <begin position="284"/>
        <end position="304"/>
    </location>
</feature>
<feature type="transmembrane region" description="Helical" evidence="4">
    <location>
        <begin position="315"/>
        <end position="335"/>
    </location>
</feature>
<feature type="transmembrane region" description="Helical" evidence="4">
    <location>
        <begin position="340"/>
        <end position="360"/>
    </location>
</feature>
<feature type="transmembrane region" description="Helical" evidence="4">
    <location>
        <begin position="364"/>
        <end position="384"/>
    </location>
</feature>
<feature type="transmembrane region" description="Helical" evidence="4">
    <location>
        <begin position="395"/>
        <end position="415"/>
    </location>
</feature>
<feature type="domain" description="PTS EIIC type-1" evidence="4">
    <location>
        <begin position="3"/>
        <end position="427"/>
    </location>
</feature>
<feature type="domain" description="PTS EIIB type-1" evidence="3">
    <location>
        <begin position="438"/>
        <end position="519"/>
    </location>
</feature>
<feature type="domain" description="PTS EIIA type-1" evidence="2">
    <location>
        <begin position="560"/>
        <end position="664"/>
    </location>
</feature>
<feature type="active site" description="Phosphocysteine intermediate; for EIIB activity" evidence="3">
    <location>
        <position position="460"/>
    </location>
</feature>
<feature type="active site" description="Tele-phosphohistidine intermediate; for EIIA activity" evidence="2">
    <location>
        <position position="612"/>
    </location>
</feature>
<reference key="1">
    <citation type="journal article" date="2004" name="Proc. Natl. Acad. Sci. U.S.A.">
        <title>Complete genomes of two clinical Staphylococcus aureus strains: evidence for the rapid evolution of virulence and drug resistance.</title>
        <authorList>
            <person name="Holden M.T.G."/>
            <person name="Feil E.J."/>
            <person name="Lindsay J.A."/>
            <person name="Peacock S.J."/>
            <person name="Day N.P.J."/>
            <person name="Enright M.C."/>
            <person name="Foster T.J."/>
            <person name="Moore C.E."/>
            <person name="Hurst L."/>
            <person name="Atkin R."/>
            <person name="Barron A."/>
            <person name="Bason N."/>
            <person name="Bentley S.D."/>
            <person name="Chillingworth C."/>
            <person name="Chillingworth T."/>
            <person name="Churcher C."/>
            <person name="Clark L."/>
            <person name="Corton C."/>
            <person name="Cronin A."/>
            <person name="Doggett J."/>
            <person name="Dowd L."/>
            <person name="Feltwell T."/>
            <person name="Hance Z."/>
            <person name="Harris B."/>
            <person name="Hauser H."/>
            <person name="Holroyd S."/>
            <person name="Jagels K."/>
            <person name="James K.D."/>
            <person name="Lennard N."/>
            <person name="Line A."/>
            <person name="Mayes R."/>
            <person name="Moule S."/>
            <person name="Mungall K."/>
            <person name="Ormond D."/>
            <person name="Quail M.A."/>
            <person name="Rabbinowitsch E."/>
            <person name="Rutherford K.M."/>
            <person name="Sanders M."/>
            <person name="Sharp S."/>
            <person name="Simmonds M."/>
            <person name="Stevens K."/>
            <person name="Whitehead S."/>
            <person name="Barrell B.G."/>
            <person name="Spratt B.G."/>
            <person name="Parkhill J."/>
        </authorList>
    </citation>
    <scope>NUCLEOTIDE SEQUENCE [LARGE SCALE GENOMIC DNA]</scope>
    <source>
        <strain>MSSA476</strain>
    </source>
</reference>
<evidence type="ECO:0000250" key="1"/>
<evidence type="ECO:0000255" key="2">
    <source>
        <dbReference type="PROSITE-ProRule" id="PRU00416"/>
    </source>
</evidence>
<evidence type="ECO:0000255" key="3">
    <source>
        <dbReference type="PROSITE-ProRule" id="PRU00421"/>
    </source>
</evidence>
<evidence type="ECO:0000255" key="4">
    <source>
        <dbReference type="PROSITE-ProRule" id="PRU00426"/>
    </source>
</evidence>
<sequence length="688" mass="74416">MFKKLFGQLQRIGKALMLPVAILPAAGILLAFGNAMHNEQLVEIAPWLKNDIIVMISSVMEAAGQVVFDNLPLLFAVGTALGLAGGDGVAALAALVGYLIMNATMGKVLHITIDDIFSYAKGAKELSQAAKEPAHALVLGIPTLQTGVFGGIIMGALAAWCYNKFYNITLPPFLGFFAGKRFVPIVTSVVAIATGVLLSFAWPPIQDGLNSLSNFLLNKNLTLTTFIFGIIERSLIPFGLHHIFYSPFWFEFGSYTNHAGELVRGDQRIWMAQLKDGVPFTAGAFTTGKYPFMMFGLPAAAFAIYKNARPERKKVVGGLMLSAGLTAFLTGITEPLEFSFLFVAPVLYGIHVLLAGTSFLVMHLLGVKIGMTFSGGFIDYILYGLLNWDRSHALLVIPVGIVYAIVYYFLFDFAIRKFKLKTPGREDEETEIRNSSVAKLPFDVLDAMGGKENIKHLDACITRLRVEVVDKSKVDVAGIKALGASGVLEVGNNMQAIFGPKSDQIKHDMAKIMSGEITKPSETTVTEEMSDEPVHVEALGTTDIYAPGIGQIIPLSEVPDQVFAGKMMGDGVGFIPEKGEIVAPFDGTVKTIFPTKHAIGLESESGVEVLIHIGIDTVKLNGEGFESLINVDEKVTQGQPLMKVNLAYLKAHAPSIVTPMIITNLENKELVIEDVQDADPGKLIMTVK</sequence>
<dbReference type="EC" id="2.7.1.-"/>
<dbReference type="EMBL" id="BX571857">
    <property type="protein sequence ID" value="CAG44240.1"/>
    <property type="molecule type" value="Genomic_DNA"/>
</dbReference>
<dbReference type="SMR" id="Q6G6D6"/>
<dbReference type="KEGG" id="sas:SAS2424"/>
<dbReference type="HOGENOM" id="CLU_012312_1_1_9"/>
<dbReference type="GO" id="GO:0005886">
    <property type="term" value="C:plasma membrane"/>
    <property type="evidence" value="ECO:0007669"/>
    <property type="project" value="UniProtKB-SubCell"/>
</dbReference>
<dbReference type="GO" id="GO:0055056">
    <property type="term" value="F:D-glucose transmembrane transporter activity"/>
    <property type="evidence" value="ECO:0007669"/>
    <property type="project" value="InterPro"/>
</dbReference>
<dbReference type="GO" id="GO:0016301">
    <property type="term" value="F:kinase activity"/>
    <property type="evidence" value="ECO:0007669"/>
    <property type="project" value="UniProtKB-KW"/>
</dbReference>
<dbReference type="GO" id="GO:0008982">
    <property type="term" value="F:protein-N(PI)-phosphohistidine-sugar phosphotransferase activity"/>
    <property type="evidence" value="ECO:0007669"/>
    <property type="project" value="InterPro"/>
</dbReference>
<dbReference type="GO" id="GO:0090563">
    <property type="term" value="F:protein-phosphocysteine-sugar phosphotransferase activity"/>
    <property type="evidence" value="ECO:0007669"/>
    <property type="project" value="TreeGrafter"/>
</dbReference>
<dbReference type="GO" id="GO:1904659">
    <property type="term" value="P:D-glucose transmembrane transport"/>
    <property type="evidence" value="ECO:0007669"/>
    <property type="project" value="InterPro"/>
</dbReference>
<dbReference type="GO" id="GO:0009401">
    <property type="term" value="P:phosphoenolpyruvate-dependent sugar phosphotransferase system"/>
    <property type="evidence" value="ECO:0007669"/>
    <property type="project" value="UniProtKB-KW"/>
</dbReference>
<dbReference type="CDD" id="cd00212">
    <property type="entry name" value="PTS_IIB_glc"/>
    <property type="match status" value="1"/>
</dbReference>
<dbReference type="FunFam" id="2.70.70.10:FF:000001">
    <property type="entry name" value="PTS system glucose-specific IIA component"/>
    <property type="match status" value="1"/>
</dbReference>
<dbReference type="FunFam" id="3.30.1360.60:FF:000001">
    <property type="entry name" value="PTS system glucose-specific IIBC component PtsG"/>
    <property type="match status" value="1"/>
</dbReference>
<dbReference type="Gene3D" id="2.70.70.10">
    <property type="entry name" value="Glucose Permease (Domain IIA)"/>
    <property type="match status" value="1"/>
</dbReference>
<dbReference type="Gene3D" id="3.30.1360.60">
    <property type="entry name" value="Glucose permease domain IIB"/>
    <property type="match status" value="1"/>
</dbReference>
<dbReference type="InterPro" id="IPR011055">
    <property type="entry name" value="Dup_hybrid_motif"/>
</dbReference>
<dbReference type="InterPro" id="IPR036878">
    <property type="entry name" value="Glu_permease_IIB"/>
</dbReference>
<dbReference type="InterPro" id="IPR018113">
    <property type="entry name" value="PTrfase_EIIB_Cys"/>
</dbReference>
<dbReference type="InterPro" id="IPR001127">
    <property type="entry name" value="PTS_EIIA_1_perm"/>
</dbReference>
<dbReference type="InterPro" id="IPR003352">
    <property type="entry name" value="PTS_EIIC"/>
</dbReference>
<dbReference type="InterPro" id="IPR013013">
    <property type="entry name" value="PTS_EIIC_1"/>
</dbReference>
<dbReference type="InterPro" id="IPR050429">
    <property type="entry name" value="PTS_Glucose_EIICBA"/>
</dbReference>
<dbReference type="InterPro" id="IPR001996">
    <property type="entry name" value="PTS_IIB_1"/>
</dbReference>
<dbReference type="InterPro" id="IPR011299">
    <property type="entry name" value="PTS_IIBC_glc"/>
</dbReference>
<dbReference type="NCBIfam" id="TIGR00826">
    <property type="entry name" value="EIIB_glc"/>
    <property type="match status" value="1"/>
</dbReference>
<dbReference type="NCBIfam" id="TIGR00830">
    <property type="entry name" value="PTBA"/>
    <property type="match status" value="1"/>
</dbReference>
<dbReference type="NCBIfam" id="TIGR02002">
    <property type="entry name" value="PTS-II-BC-glcB"/>
    <property type="match status" value="1"/>
</dbReference>
<dbReference type="PANTHER" id="PTHR30009">
    <property type="entry name" value="CYTOCHROME C-TYPE SYNTHESIS PROTEIN AND PTS TRANSMEMBRANE COMPONENT"/>
    <property type="match status" value="1"/>
</dbReference>
<dbReference type="PANTHER" id="PTHR30009:SF20">
    <property type="entry name" value="PTS SYSTEM GLUCOSE-SPECIFIC EIICB COMPONENT-RELATED"/>
    <property type="match status" value="1"/>
</dbReference>
<dbReference type="Pfam" id="PF00358">
    <property type="entry name" value="PTS_EIIA_1"/>
    <property type="match status" value="1"/>
</dbReference>
<dbReference type="Pfam" id="PF00367">
    <property type="entry name" value="PTS_EIIB"/>
    <property type="match status" value="1"/>
</dbReference>
<dbReference type="Pfam" id="PF02378">
    <property type="entry name" value="PTS_EIIC"/>
    <property type="match status" value="1"/>
</dbReference>
<dbReference type="SUPFAM" id="SSF51261">
    <property type="entry name" value="Duplicated hybrid motif"/>
    <property type="match status" value="1"/>
</dbReference>
<dbReference type="SUPFAM" id="SSF55604">
    <property type="entry name" value="Glucose permease domain IIB"/>
    <property type="match status" value="1"/>
</dbReference>
<dbReference type="PROSITE" id="PS51093">
    <property type="entry name" value="PTS_EIIA_TYPE_1"/>
    <property type="match status" value="1"/>
</dbReference>
<dbReference type="PROSITE" id="PS00371">
    <property type="entry name" value="PTS_EIIA_TYPE_1_HIS"/>
    <property type="match status" value="1"/>
</dbReference>
<dbReference type="PROSITE" id="PS51098">
    <property type="entry name" value="PTS_EIIB_TYPE_1"/>
    <property type="match status" value="1"/>
</dbReference>
<dbReference type="PROSITE" id="PS01035">
    <property type="entry name" value="PTS_EIIB_TYPE_1_CYS"/>
    <property type="match status" value="1"/>
</dbReference>
<dbReference type="PROSITE" id="PS51103">
    <property type="entry name" value="PTS_EIIC_TYPE_1"/>
    <property type="match status" value="1"/>
</dbReference>
<accession>Q6G6D6</accession>